<organism>
    <name type="scientific">Synechocystis sp. (strain ATCC 27184 / PCC 6803 / Kazusa)</name>
    <dbReference type="NCBI Taxonomy" id="1111708"/>
    <lineage>
        <taxon>Bacteria</taxon>
        <taxon>Bacillati</taxon>
        <taxon>Cyanobacteriota</taxon>
        <taxon>Cyanophyceae</taxon>
        <taxon>Synechococcales</taxon>
        <taxon>Merismopediaceae</taxon>
        <taxon>Synechocystis</taxon>
    </lineage>
</organism>
<name>MURJ_SYNY3</name>
<dbReference type="EMBL" id="BA000022">
    <property type="protein sequence ID" value="BAA10319.1"/>
    <property type="molecule type" value="Genomic_DNA"/>
</dbReference>
<dbReference type="PIR" id="S74401">
    <property type="entry name" value="S74401"/>
</dbReference>
<dbReference type="SMR" id="Q55179"/>
<dbReference type="STRING" id="1148.gene:10499819"/>
<dbReference type="PaxDb" id="1148-1001176"/>
<dbReference type="EnsemblBacteria" id="BAA10319">
    <property type="protein sequence ID" value="BAA10319"/>
    <property type="gene ID" value="BAA10319"/>
</dbReference>
<dbReference type="KEGG" id="syn:slr0488"/>
<dbReference type="eggNOG" id="COG0728">
    <property type="taxonomic scope" value="Bacteria"/>
</dbReference>
<dbReference type="InParanoid" id="Q55179"/>
<dbReference type="PhylomeDB" id="Q55179"/>
<dbReference type="UniPathway" id="UPA00219"/>
<dbReference type="Proteomes" id="UP000001425">
    <property type="component" value="Chromosome"/>
</dbReference>
<dbReference type="GO" id="GO:0005886">
    <property type="term" value="C:plasma membrane"/>
    <property type="evidence" value="ECO:0007669"/>
    <property type="project" value="UniProtKB-SubCell"/>
</dbReference>
<dbReference type="GO" id="GO:0015648">
    <property type="term" value="F:lipid-linked peptidoglycan transporter activity"/>
    <property type="evidence" value="ECO:0007669"/>
    <property type="project" value="UniProtKB-UniRule"/>
</dbReference>
<dbReference type="GO" id="GO:0071555">
    <property type="term" value="P:cell wall organization"/>
    <property type="evidence" value="ECO:0007669"/>
    <property type="project" value="UniProtKB-KW"/>
</dbReference>
<dbReference type="GO" id="GO:0009252">
    <property type="term" value="P:peptidoglycan biosynthetic process"/>
    <property type="evidence" value="ECO:0007669"/>
    <property type="project" value="UniProtKB-UniRule"/>
</dbReference>
<dbReference type="GO" id="GO:0008360">
    <property type="term" value="P:regulation of cell shape"/>
    <property type="evidence" value="ECO:0007669"/>
    <property type="project" value="UniProtKB-KW"/>
</dbReference>
<dbReference type="CDD" id="cd13123">
    <property type="entry name" value="MATE_MurJ_like"/>
    <property type="match status" value="1"/>
</dbReference>
<dbReference type="HAMAP" id="MF_02078">
    <property type="entry name" value="MurJ_MviN"/>
    <property type="match status" value="1"/>
</dbReference>
<dbReference type="InterPro" id="IPR004268">
    <property type="entry name" value="MurJ"/>
</dbReference>
<dbReference type="NCBIfam" id="TIGR01695">
    <property type="entry name" value="murJ_mviN"/>
    <property type="match status" value="1"/>
</dbReference>
<dbReference type="PANTHER" id="PTHR43486">
    <property type="entry name" value="LIPID II FLIPPASE MURJ-RELATED"/>
    <property type="match status" value="1"/>
</dbReference>
<dbReference type="PANTHER" id="PTHR43486:SF1">
    <property type="entry name" value="LIPID II FLIPPASE MURJ-RELATED"/>
    <property type="match status" value="1"/>
</dbReference>
<dbReference type="Pfam" id="PF03023">
    <property type="entry name" value="MurJ"/>
    <property type="match status" value="1"/>
</dbReference>
<dbReference type="PIRSF" id="PIRSF002869">
    <property type="entry name" value="MviN"/>
    <property type="match status" value="1"/>
</dbReference>
<dbReference type="PRINTS" id="PR01806">
    <property type="entry name" value="VIRFACTRMVIN"/>
</dbReference>
<comment type="function">
    <text evidence="1">Involved in peptidoglycan biosynthesis. Transports lipid-linked peptidoglycan precursors from the inner to the outer leaflet of the cytoplasmic membrane.</text>
</comment>
<comment type="pathway">
    <text evidence="1">Cell wall biogenesis; peptidoglycan biosynthesis.</text>
</comment>
<comment type="subcellular location">
    <subcellularLocation>
        <location evidence="1">Cell inner membrane</location>
        <topology evidence="1">Multi-pass membrane protein</topology>
    </subcellularLocation>
</comment>
<comment type="similarity">
    <text evidence="1">Belongs to the MurJ/MviN family.</text>
</comment>
<accession>Q55179</accession>
<protein>
    <recommendedName>
        <fullName evidence="1">Probable lipid II flippase MurJ</fullName>
    </recommendedName>
</protein>
<evidence type="ECO:0000255" key="1">
    <source>
        <dbReference type="HAMAP-Rule" id="MF_02078"/>
    </source>
</evidence>
<keyword id="KW-0997">Cell inner membrane</keyword>
<keyword id="KW-1003">Cell membrane</keyword>
<keyword id="KW-0133">Cell shape</keyword>
<keyword id="KW-0961">Cell wall biogenesis/degradation</keyword>
<keyword id="KW-0472">Membrane</keyword>
<keyword id="KW-0573">Peptidoglycan synthesis</keyword>
<keyword id="KW-1185">Reference proteome</keyword>
<keyword id="KW-0812">Transmembrane</keyword>
<keyword id="KW-1133">Transmembrane helix</keyword>
<keyword id="KW-0813">Transport</keyword>
<reference key="1">
    <citation type="journal article" date="1995" name="DNA Res.">
        <title>Sequence analysis of the genome of the unicellular cyanobacterium Synechocystis sp. strain PCC6803. I. Sequence features in the 1 Mb region from map positions 64% to 92% of the genome.</title>
        <authorList>
            <person name="Kaneko T."/>
            <person name="Tanaka A."/>
            <person name="Sato S."/>
            <person name="Kotani H."/>
            <person name="Sazuka T."/>
            <person name="Miyajima N."/>
            <person name="Sugiura M."/>
            <person name="Tabata S."/>
        </authorList>
    </citation>
    <scope>NUCLEOTIDE SEQUENCE [LARGE SCALE GENOMIC DNA]</scope>
    <source>
        <strain>ATCC 27184 / PCC 6803 / N-1</strain>
    </source>
</reference>
<reference key="2">
    <citation type="journal article" date="1996" name="DNA Res.">
        <title>Sequence analysis of the genome of the unicellular cyanobacterium Synechocystis sp. strain PCC6803. II. Sequence determination of the entire genome and assignment of potential protein-coding regions.</title>
        <authorList>
            <person name="Kaneko T."/>
            <person name="Sato S."/>
            <person name="Kotani H."/>
            <person name="Tanaka A."/>
            <person name="Asamizu E."/>
            <person name="Nakamura Y."/>
            <person name="Miyajima N."/>
            <person name="Hirosawa M."/>
            <person name="Sugiura M."/>
            <person name="Sasamoto S."/>
            <person name="Kimura T."/>
            <person name="Hosouchi T."/>
            <person name="Matsuno A."/>
            <person name="Muraki A."/>
            <person name="Nakazaki N."/>
            <person name="Naruo K."/>
            <person name="Okumura S."/>
            <person name="Shimpo S."/>
            <person name="Takeuchi C."/>
            <person name="Wada T."/>
            <person name="Watanabe A."/>
            <person name="Yamada M."/>
            <person name="Yasuda M."/>
            <person name="Tabata S."/>
        </authorList>
    </citation>
    <scope>NUCLEOTIDE SEQUENCE [LARGE SCALE GENOMIC DNA]</scope>
    <source>
        <strain>ATCC 27184 / PCC 6803 / Kazusa</strain>
    </source>
</reference>
<sequence length="533" mass="57053">MSPSGKSSRSLANIAGIVAIATLISKVFGLLREQIIAAAFGVGTVVTAYAYAYVIPGFLFILLGGINGPFHSALVSVLSKRDREEAAPLVETVTTLVSGVLLGVTIILVLGAGIFIDLLAPGLEPETRRMAVQQLQIMAPMALLSGLIGIGFGTLNAADQYLLPSISPLLSSITVILGLGVAVWQLGQQLNTEPYWLLGSLLLAGGTTAGAVLQWLAQIVPQAKAGMGKLRLRFNFALPGVKEVLQVMIPATLSSGMLYINFATNLFFASFIPNAAAAMRYGNFVALTPLGIISNMILVPFLPVFSRLADPQDWPELKLRIRQGIMLSALTMFPLTAILVGLAIPIVQVIYERGAFDAEAAAEVAPVLAAYGLGMFFYLGRDVLVRVFYALGDGNSPFKVSLFNIFLNGLLDYLFYKPFGTVGIVMATVGVNLFSMTIFIWMLNRRLAGLSLGGWAMDLGKLVGVTAIASVAGWQGSVLWQRLWGVNSLVENILEVLTMSSIILVVFTVGVALAKVPEVDLLGDRLWKKFKRV</sequence>
<gene>
    <name evidence="1" type="primary">murJ</name>
    <name type="synonym">mviN</name>
    <name type="ordered locus">slr0488</name>
</gene>
<proteinExistence type="inferred from homology"/>
<feature type="chain" id="PRO_0000182015" description="Probable lipid II flippase MurJ">
    <location>
        <begin position="1"/>
        <end position="533"/>
    </location>
</feature>
<feature type="transmembrane region" description="Helical" evidence="1">
    <location>
        <begin position="11"/>
        <end position="31"/>
    </location>
</feature>
<feature type="transmembrane region" description="Helical" evidence="1">
    <location>
        <begin position="39"/>
        <end position="61"/>
    </location>
</feature>
<feature type="transmembrane region" description="Helical" evidence="1">
    <location>
        <begin position="96"/>
        <end position="116"/>
    </location>
</feature>
<feature type="transmembrane region" description="Helical" evidence="1">
    <location>
        <begin position="135"/>
        <end position="155"/>
    </location>
</feature>
<feature type="transmembrane region" description="Helical" evidence="1">
    <location>
        <begin position="166"/>
        <end position="186"/>
    </location>
</feature>
<feature type="transmembrane region" description="Helical" evidence="1">
    <location>
        <begin position="196"/>
        <end position="216"/>
    </location>
</feature>
<feature type="transmembrane region" description="Helical" evidence="1">
    <location>
        <begin position="253"/>
        <end position="273"/>
    </location>
</feature>
<feature type="transmembrane region" description="Helical" evidence="1">
    <location>
        <begin position="284"/>
        <end position="304"/>
    </location>
</feature>
<feature type="transmembrane region" description="Helical" evidence="1">
    <location>
        <begin position="330"/>
        <end position="350"/>
    </location>
</feature>
<feature type="transmembrane region" description="Helical" evidence="1">
    <location>
        <begin position="360"/>
        <end position="380"/>
    </location>
</feature>
<feature type="transmembrane region" description="Helical" evidence="1">
    <location>
        <begin position="400"/>
        <end position="420"/>
    </location>
</feature>
<feature type="transmembrane region" description="Helical" evidence="1">
    <location>
        <begin position="422"/>
        <end position="442"/>
    </location>
</feature>
<feature type="transmembrane region" description="Helical" evidence="1">
    <location>
        <begin position="452"/>
        <end position="472"/>
    </location>
</feature>
<feature type="transmembrane region" description="Helical" evidence="1">
    <location>
        <begin position="493"/>
        <end position="513"/>
    </location>
</feature>